<comment type="function">
    <text evidence="1">Plays an essential role in the initiation and regulation of chromosomal replication. ATP-DnaA binds to the origin of replication (oriC) to initiate formation of the DNA replication initiation complex once per cell cycle. Binds the DnaA box (a 9 base pair repeat at the origin) and separates the double-stranded (ds)DNA. Forms a right-handed helical filament on oriC DNA; dsDNA binds to the exterior of the filament while single-stranded (ss)DNA is stabiized in the filament's interior. The ATP-DnaA-oriC complex binds and stabilizes one strand of the AT-rich DNA unwinding element (DUE), permitting loading of DNA polymerase. After initiation quickly degrades to an ADP-DnaA complex that is not apt for DNA replication. Binds acidic phospholipids.</text>
</comment>
<comment type="subunit">
    <text evidence="1">Oligomerizes as a right-handed, spiral filament on DNA at oriC.</text>
</comment>
<comment type="subcellular location">
    <subcellularLocation>
        <location evidence="1">Cytoplasm</location>
    </subcellularLocation>
</comment>
<comment type="domain">
    <text evidence="1">Domain I is involved in oligomerization and binding regulators, domain II is flexibile and of varying length in different bacteria, domain III forms the AAA+ region, while domain IV binds dsDNA.</text>
</comment>
<comment type="similarity">
    <text evidence="1">Belongs to the DnaA family.</text>
</comment>
<protein>
    <recommendedName>
        <fullName evidence="1">Chromosomal replication initiator protein DnaA</fullName>
    </recommendedName>
</protein>
<evidence type="ECO:0000255" key="1">
    <source>
        <dbReference type="HAMAP-Rule" id="MF_00377"/>
    </source>
</evidence>
<reference key="1">
    <citation type="journal article" date="2009" name="BMC Genomics">
        <title>Analysis of the Rickettsia africae genome reveals that virulence acquisition in Rickettsia species may be explained by genome reduction.</title>
        <authorList>
            <person name="Fournier P.-E."/>
            <person name="El Karkouri K."/>
            <person name="Leroy Q."/>
            <person name="Robert C."/>
            <person name="Giumelli B."/>
            <person name="Renesto P."/>
            <person name="Socolovschi C."/>
            <person name="Parola P."/>
            <person name="Audic S."/>
            <person name="Raoult D."/>
        </authorList>
    </citation>
    <scope>NUCLEOTIDE SEQUENCE [LARGE SCALE GENOMIC DNA]</scope>
    <source>
        <strain>ESF-5</strain>
    </source>
</reference>
<sequence>MSTNQIILTDQGNNYVNVWSHVAQDLYNHYGETLYNSWFSKVNFIESSLNTVILCAPTNFVRDWIKSKYSMVILQLFQHYNNTIKSIEIITKELPGTTQTVTELPTKTFADIGSSELNSENIFSTLDVRFTFDNFVVGAPNELAYAAARAVAESSGAVSESNPLFLYGGVGLGKTHLMHAIGWYIKQHNPSRKVIYMSAEKFMYQFVKALRNKEVISFKEKFRSVDVLMIDDIQFICGKDSTQEEFFHTFNTLIDNNRQMVISCDRSPSDLDNIEDRIKSRLGWGLVADVHSTTYELRLGILESKIEQMNVKIPKDVIDFLASKIVSNVRELEGALNKVIAHSNFTLKEITLENTQNILRDLLRSNERIITVEDIQKKVASRYNIKLSDMSSSRRLREVARPRQIAMYLSKALTPKSLADIGKKFGKKDHTTVMHAIKKVEELLENDIELREEIHLLMKILQN</sequence>
<proteinExistence type="inferred from homology"/>
<feature type="chain" id="PRO_1000205661" description="Chromosomal replication initiator protein DnaA">
    <location>
        <begin position="1"/>
        <end position="463"/>
    </location>
</feature>
<feature type="region of interest" description="Domain I, interacts with DnaA modulators" evidence="1">
    <location>
        <begin position="1"/>
        <end position="83"/>
    </location>
</feature>
<feature type="region of interest" description="Domain II" evidence="1">
    <location>
        <begin position="83"/>
        <end position="124"/>
    </location>
</feature>
<feature type="region of interest" description="Domain III, AAA+ region" evidence="1">
    <location>
        <begin position="125"/>
        <end position="343"/>
    </location>
</feature>
<feature type="region of interest" description="Domain IV, binds dsDNA" evidence="1">
    <location>
        <begin position="344"/>
        <end position="463"/>
    </location>
</feature>
<feature type="binding site" evidence="1">
    <location>
        <position position="171"/>
    </location>
    <ligand>
        <name>ATP</name>
        <dbReference type="ChEBI" id="CHEBI:30616"/>
    </ligand>
</feature>
<feature type="binding site" evidence="1">
    <location>
        <position position="173"/>
    </location>
    <ligand>
        <name>ATP</name>
        <dbReference type="ChEBI" id="CHEBI:30616"/>
    </ligand>
</feature>
<feature type="binding site" evidence="1">
    <location>
        <position position="174"/>
    </location>
    <ligand>
        <name>ATP</name>
        <dbReference type="ChEBI" id="CHEBI:30616"/>
    </ligand>
</feature>
<feature type="binding site" evidence="1">
    <location>
        <position position="175"/>
    </location>
    <ligand>
        <name>ATP</name>
        <dbReference type="ChEBI" id="CHEBI:30616"/>
    </ligand>
</feature>
<keyword id="KW-0067">ATP-binding</keyword>
<keyword id="KW-0963">Cytoplasm</keyword>
<keyword id="KW-0235">DNA replication</keyword>
<keyword id="KW-0238">DNA-binding</keyword>
<keyword id="KW-0446">Lipid-binding</keyword>
<keyword id="KW-0547">Nucleotide-binding</keyword>
<name>DNAA_RICAE</name>
<dbReference type="EMBL" id="CP001612">
    <property type="protein sequence ID" value="ACP53701.1"/>
    <property type="molecule type" value="Genomic_DNA"/>
</dbReference>
<dbReference type="RefSeq" id="WP_012719886.1">
    <property type="nucleotide sequence ID" value="NC_012633.1"/>
</dbReference>
<dbReference type="SMR" id="C3PP41"/>
<dbReference type="KEGG" id="raf:RAF_ORF0831"/>
<dbReference type="HOGENOM" id="CLU_026910_3_0_5"/>
<dbReference type="Proteomes" id="UP000002305">
    <property type="component" value="Chromosome"/>
</dbReference>
<dbReference type="GO" id="GO:0005737">
    <property type="term" value="C:cytoplasm"/>
    <property type="evidence" value="ECO:0007669"/>
    <property type="project" value="UniProtKB-SubCell"/>
</dbReference>
<dbReference type="GO" id="GO:0005886">
    <property type="term" value="C:plasma membrane"/>
    <property type="evidence" value="ECO:0007669"/>
    <property type="project" value="TreeGrafter"/>
</dbReference>
<dbReference type="GO" id="GO:0005524">
    <property type="term" value="F:ATP binding"/>
    <property type="evidence" value="ECO:0007669"/>
    <property type="project" value="UniProtKB-UniRule"/>
</dbReference>
<dbReference type="GO" id="GO:0016887">
    <property type="term" value="F:ATP hydrolysis activity"/>
    <property type="evidence" value="ECO:0007669"/>
    <property type="project" value="InterPro"/>
</dbReference>
<dbReference type="GO" id="GO:0003688">
    <property type="term" value="F:DNA replication origin binding"/>
    <property type="evidence" value="ECO:0007669"/>
    <property type="project" value="UniProtKB-UniRule"/>
</dbReference>
<dbReference type="GO" id="GO:0008289">
    <property type="term" value="F:lipid binding"/>
    <property type="evidence" value="ECO:0007669"/>
    <property type="project" value="UniProtKB-KW"/>
</dbReference>
<dbReference type="GO" id="GO:0006270">
    <property type="term" value="P:DNA replication initiation"/>
    <property type="evidence" value="ECO:0007669"/>
    <property type="project" value="UniProtKB-UniRule"/>
</dbReference>
<dbReference type="GO" id="GO:0006275">
    <property type="term" value="P:regulation of DNA replication"/>
    <property type="evidence" value="ECO:0007669"/>
    <property type="project" value="UniProtKB-UniRule"/>
</dbReference>
<dbReference type="CDD" id="cd00009">
    <property type="entry name" value="AAA"/>
    <property type="match status" value="1"/>
</dbReference>
<dbReference type="CDD" id="cd06571">
    <property type="entry name" value="Bac_DnaA_C"/>
    <property type="match status" value="1"/>
</dbReference>
<dbReference type="FunFam" id="3.40.50.300:FF:000668">
    <property type="entry name" value="Chromosomal replication initiator protein DnaA"/>
    <property type="match status" value="1"/>
</dbReference>
<dbReference type="Gene3D" id="1.10.1750.10">
    <property type="match status" value="1"/>
</dbReference>
<dbReference type="Gene3D" id="1.10.8.60">
    <property type="match status" value="1"/>
</dbReference>
<dbReference type="Gene3D" id="3.30.300.180">
    <property type="match status" value="1"/>
</dbReference>
<dbReference type="Gene3D" id="3.40.50.300">
    <property type="entry name" value="P-loop containing nucleotide triphosphate hydrolases"/>
    <property type="match status" value="1"/>
</dbReference>
<dbReference type="HAMAP" id="MF_00377">
    <property type="entry name" value="DnaA_bact"/>
    <property type="match status" value="1"/>
</dbReference>
<dbReference type="InterPro" id="IPR003593">
    <property type="entry name" value="AAA+_ATPase"/>
</dbReference>
<dbReference type="InterPro" id="IPR001957">
    <property type="entry name" value="Chromosome_initiator_DnaA"/>
</dbReference>
<dbReference type="InterPro" id="IPR020591">
    <property type="entry name" value="Chromosome_initiator_DnaA-like"/>
</dbReference>
<dbReference type="InterPro" id="IPR018312">
    <property type="entry name" value="Chromosome_initiator_DnaA_CS"/>
</dbReference>
<dbReference type="InterPro" id="IPR013159">
    <property type="entry name" value="DnaA_C"/>
</dbReference>
<dbReference type="InterPro" id="IPR013317">
    <property type="entry name" value="DnaA_dom"/>
</dbReference>
<dbReference type="InterPro" id="IPR024633">
    <property type="entry name" value="DnaA_N_dom"/>
</dbReference>
<dbReference type="InterPro" id="IPR038454">
    <property type="entry name" value="DnaA_N_sf"/>
</dbReference>
<dbReference type="InterPro" id="IPR027417">
    <property type="entry name" value="P-loop_NTPase"/>
</dbReference>
<dbReference type="InterPro" id="IPR010921">
    <property type="entry name" value="Trp_repressor/repl_initiator"/>
</dbReference>
<dbReference type="NCBIfam" id="TIGR00362">
    <property type="entry name" value="DnaA"/>
    <property type="match status" value="1"/>
</dbReference>
<dbReference type="PANTHER" id="PTHR30050">
    <property type="entry name" value="CHROMOSOMAL REPLICATION INITIATOR PROTEIN DNAA"/>
    <property type="match status" value="1"/>
</dbReference>
<dbReference type="PANTHER" id="PTHR30050:SF2">
    <property type="entry name" value="CHROMOSOMAL REPLICATION INITIATOR PROTEIN DNAA"/>
    <property type="match status" value="1"/>
</dbReference>
<dbReference type="Pfam" id="PF00308">
    <property type="entry name" value="Bac_DnaA"/>
    <property type="match status" value="1"/>
</dbReference>
<dbReference type="Pfam" id="PF08299">
    <property type="entry name" value="Bac_DnaA_C"/>
    <property type="match status" value="1"/>
</dbReference>
<dbReference type="Pfam" id="PF11638">
    <property type="entry name" value="DnaA_N"/>
    <property type="match status" value="1"/>
</dbReference>
<dbReference type="PRINTS" id="PR00051">
    <property type="entry name" value="DNAA"/>
</dbReference>
<dbReference type="SMART" id="SM00382">
    <property type="entry name" value="AAA"/>
    <property type="match status" value="1"/>
</dbReference>
<dbReference type="SMART" id="SM00760">
    <property type="entry name" value="Bac_DnaA_C"/>
    <property type="match status" value="1"/>
</dbReference>
<dbReference type="SUPFAM" id="SSF52540">
    <property type="entry name" value="P-loop containing nucleoside triphosphate hydrolases"/>
    <property type="match status" value="1"/>
</dbReference>
<dbReference type="SUPFAM" id="SSF48295">
    <property type="entry name" value="TrpR-like"/>
    <property type="match status" value="1"/>
</dbReference>
<dbReference type="PROSITE" id="PS01008">
    <property type="entry name" value="DNAA"/>
    <property type="match status" value="1"/>
</dbReference>
<gene>
    <name evidence="1" type="primary">dnaA</name>
    <name type="ordered locus">RAF_ORF0831</name>
</gene>
<accession>C3PP41</accession>
<organism>
    <name type="scientific">Rickettsia africae (strain ESF-5)</name>
    <dbReference type="NCBI Taxonomy" id="347255"/>
    <lineage>
        <taxon>Bacteria</taxon>
        <taxon>Pseudomonadati</taxon>
        <taxon>Pseudomonadota</taxon>
        <taxon>Alphaproteobacteria</taxon>
        <taxon>Rickettsiales</taxon>
        <taxon>Rickettsiaceae</taxon>
        <taxon>Rickettsieae</taxon>
        <taxon>Rickettsia</taxon>
        <taxon>spotted fever group</taxon>
    </lineage>
</organism>